<comment type="subunit">
    <text evidence="1">Interacts with microtubules.</text>
</comment>
<comment type="subcellular location">
    <subcellularLocation>
        <location evidence="6">Membrane</location>
        <topology evidence="6">Single-pass membrane protein</topology>
    </subcellularLocation>
    <subcellularLocation>
        <location>Cytoplasm</location>
    </subcellularLocation>
    <subcellularLocation>
        <location evidence="1">Cytoplasm</location>
        <location evidence="1">Cytoskeleton</location>
        <location evidence="1">Spindle</location>
    </subcellularLocation>
    <subcellularLocation>
        <location evidence="1">Cytoplasm</location>
        <location evidence="1">Cytoskeleton</location>
        <location evidence="1">Spindle pole</location>
    </subcellularLocation>
    <text evidence="1">In interphase localizes in the cytoplasm, and during mitosis localizes to the spindle microtubules and spindle poles. Also detected as large dots in the perinuclear region (By similarity).</text>
</comment>
<comment type="similarity">
    <text evidence="6">Belongs to the RMDN family.</text>
</comment>
<comment type="sequence caution" evidence="6">
    <conflict type="erroneous initiation">
        <sequence resource="EMBL-CDS" id="AAH24059"/>
    </conflict>
    <text>Truncated N-terminus.</text>
</comment>
<reference key="1">
    <citation type="journal article" date="2005" name="Science">
        <title>The transcriptional landscape of the mammalian genome.</title>
        <authorList>
            <person name="Carninci P."/>
            <person name="Kasukawa T."/>
            <person name="Katayama S."/>
            <person name="Gough J."/>
            <person name="Frith M.C."/>
            <person name="Maeda N."/>
            <person name="Oyama R."/>
            <person name="Ravasi T."/>
            <person name="Lenhard B."/>
            <person name="Wells C."/>
            <person name="Kodzius R."/>
            <person name="Shimokawa K."/>
            <person name="Bajic V.B."/>
            <person name="Brenner S.E."/>
            <person name="Batalov S."/>
            <person name="Forrest A.R."/>
            <person name="Zavolan M."/>
            <person name="Davis M.J."/>
            <person name="Wilming L.G."/>
            <person name="Aidinis V."/>
            <person name="Allen J.E."/>
            <person name="Ambesi-Impiombato A."/>
            <person name="Apweiler R."/>
            <person name="Aturaliya R.N."/>
            <person name="Bailey T.L."/>
            <person name="Bansal M."/>
            <person name="Baxter L."/>
            <person name="Beisel K.W."/>
            <person name="Bersano T."/>
            <person name="Bono H."/>
            <person name="Chalk A.M."/>
            <person name="Chiu K.P."/>
            <person name="Choudhary V."/>
            <person name="Christoffels A."/>
            <person name="Clutterbuck D.R."/>
            <person name="Crowe M.L."/>
            <person name="Dalla E."/>
            <person name="Dalrymple B.P."/>
            <person name="de Bono B."/>
            <person name="Della Gatta G."/>
            <person name="di Bernardo D."/>
            <person name="Down T."/>
            <person name="Engstrom P."/>
            <person name="Fagiolini M."/>
            <person name="Faulkner G."/>
            <person name="Fletcher C.F."/>
            <person name="Fukushima T."/>
            <person name="Furuno M."/>
            <person name="Futaki S."/>
            <person name="Gariboldi M."/>
            <person name="Georgii-Hemming P."/>
            <person name="Gingeras T.R."/>
            <person name="Gojobori T."/>
            <person name="Green R.E."/>
            <person name="Gustincich S."/>
            <person name="Harbers M."/>
            <person name="Hayashi Y."/>
            <person name="Hensch T.K."/>
            <person name="Hirokawa N."/>
            <person name="Hill D."/>
            <person name="Huminiecki L."/>
            <person name="Iacono M."/>
            <person name="Ikeo K."/>
            <person name="Iwama A."/>
            <person name="Ishikawa T."/>
            <person name="Jakt M."/>
            <person name="Kanapin A."/>
            <person name="Katoh M."/>
            <person name="Kawasawa Y."/>
            <person name="Kelso J."/>
            <person name="Kitamura H."/>
            <person name="Kitano H."/>
            <person name="Kollias G."/>
            <person name="Krishnan S.P."/>
            <person name="Kruger A."/>
            <person name="Kummerfeld S.K."/>
            <person name="Kurochkin I.V."/>
            <person name="Lareau L.F."/>
            <person name="Lazarevic D."/>
            <person name="Lipovich L."/>
            <person name="Liu J."/>
            <person name="Liuni S."/>
            <person name="McWilliam S."/>
            <person name="Madan Babu M."/>
            <person name="Madera M."/>
            <person name="Marchionni L."/>
            <person name="Matsuda H."/>
            <person name="Matsuzawa S."/>
            <person name="Miki H."/>
            <person name="Mignone F."/>
            <person name="Miyake S."/>
            <person name="Morris K."/>
            <person name="Mottagui-Tabar S."/>
            <person name="Mulder N."/>
            <person name="Nakano N."/>
            <person name="Nakauchi H."/>
            <person name="Ng P."/>
            <person name="Nilsson R."/>
            <person name="Nishiguchi S."/>
            <person name="Nishikawa S."/>
            <person name="Nori F."/>
            <person name="Ohara O."/>
            <person name="Okazaki Y."/>
            <person name="Orlando V."/>
            <person name="Pang K.C."/>
            <person name="Pavan W.J."/>
            <person name="Pavesi G."/>
            <person name="Pesole G."/>
            <person name="Petrovsky N."/>
            <person name="Piazza S."/>
            <person name="Reed J."/>
            <person name="Reid J.F."/>
            <person name="Ring B.Z."/>
            <person name="Ringwald M."/>
            <person name="Rost B."/>
            <person name="Ruan Y."/>
            <person name="Salzberg S.L."/>
            <person name="Sandelin A."/>
            <person name="Schneider C."/>
            <person name="Schoenbach C."/>
            <person name="Sekiguchi K."/>
            <person name="Semple C.A."/>
            <person name="Seno S."/>
            <person name="Sessa L."/>
            <person name="Sheng Y."/>
            <person name="Shibata Y."/>
            <person name="Shimada H."/>
            <person name="Shimada K."/>
            <person name="Silva D."/>
            <person name="Sinclair B."/>
            <person name="Sperling S."/>
            <person name="Stupka E."/>
            <person name="Sugiura K."/>
            <person name="Sultana R."/>
            <person name="Takenaka Y."/>
            <person name="Taki K."/>
            <person name="Tammoja K."/>
            <person name="Tan S.L."/>
            <person name="Tang S."/>
            <person name="Taylor M.S."/>
            <person name="Tegner J."/>
            <person name="Teichmann S.A."/>
            <person name="Ueda H.R."/>
            <person name="van Nimwegen E."/>
            <person name="Verardo R."/>
            <person name="Wei C.L."/>
            <person name="Yagi K."/>
            <person name="Yamanishi H."/>
            <person name="Zabarovsky E."/>
            <person name="Zhu S."/>
            <person name="Zimmer A."/>
            <person name="Hide W."/>
            <person name="Bult C."/>
            <person name="Grimmond S.M."/>
            <person name="Teasdale R.D."/>
            <person name="Liu E.T."/>
            <person name="Brusic V."/>
            <person name="Quackenbush J."/>
            <person name="Wahlestedt C."/>
            <person name="Mattick J.S."/>
            <person name="Hume D.A."/>
            <person name="Kai C."/>
            <person name="Sasaki D."/>
            <person name="Tomaru Y."/>
            <person name="Fukuda S."/>
            <person name="Kanamori-Katayama M."/>
            <person name="Suzuki M."/>
            <person name="Aoki J."/>
            <person name="Arakawa T."/>
            <person name="Iida J."/>
            <person name="Imamura K."/>
            <person name="Itoh M."/>
            <person name="Kato T."/>
            <person name="Kawaji H."/>
            <person name="Kawagashira N."/>
            <person name="Kawashima T."/>
            <person name="Kojima M."/>
            <person name="Kondo S."/>
            <person name="Konno H."/>
            <person name="Nakano K."/>
            <person name="Ninomiya N."/>
            <person name="Nishio T."/>
            <person name="Okada M."/>
            <person name="Plessy C."/>
            <person name="Shibata K."/>
            <person name="Shiraki T."/>
            <person name="Suzuki S."/>
            <person name="Tagami M."/>
            <person name="Waki K."/>
            <person name="Watahiki A."/>
            <person name="Okamura-Oho Y."/>
            <person name="Suzuki H."/>
            <person name="Kawai J."/>
            <person name="Hayashizaki Y."/>
        </authorList>
    </citation>
    <scope>NUCLEOTIDE SEQUENCE [LARGE SCALE MRNA]</scope>
    <source>
        <strain>C57BL/6J</strain>
        <tissue>Brain cortex</tissue>
        <tissue>Embryo</tissue>
    </source>
</reference>
<reference key="2">
    <citation type="journal article" date="2004" name="Genome Res.">
        <title>The status, quality, and expansion of the NIH full-length cDNA project: the Mammalian Gene Collection (MGC).</title>
        <authorList>
            <consortium name="The MGC Project Team"/>
        </authorList>
    </citation>
    <scope>NUCLEOTIDE SEQUENCE [LARGE SCALE MRNA]</scope>
    <source>
        <strain>Czech II</strain>
        <tissue>Mammary tumor</tissue>
    </source>
</reference>
<reference key="3">
    <citation type="journal article" date="2007" name="J. Cell Biol.">
        <title>RMD-1, a novel microtubule-associated protein, functions in chromosome segregation in Caenorhabditis elegans.</title>
        <authorList>
            <person name="Oishi K."/>
            <person name="Okano H."/>
            <person name="Sawa H."/>
        </authorList>
    </citation>
    <scope>IDENTIFICATION</scope>
</reference>
<reference key="4">
    <citation type="journal article" date="2007" name="Proc. Natl. Acad. Sci. U.S.A.">
        <title>Large-scale phosphorylation analysis of mouse liver.</title>
        <authorList>
            <person name="Villen J."/>
            <person name="Beausoleil S.A."/>
            <person name="Gerber S.A."/>
            <person name="Gygi S.P."/>
        </authorList>
    </citation>
    <scope>IDENTIFICATION BY MASS SPECTROMETRY [LARGE SCALE ANALYSIS]</scope>
    <source>
        <tissue>Liver</tissue>
    </source>
</reference>
<reference key="5">
    <citation type="journal article" date="2010" name="Cell">
        <title>A tissue-specific atlas of mouse protein phosphorylation and expression.</title>
        <authorList>
            <person name="Huttlin E.L."/>
            <person name="Jedrychowski M.P."/>
            <person name="Elias J.E."/>
            <person name="Goswami T."/>
            <person name="Rad R."/>
            <person name="Beausoleil S.A."/>
            <person name="Villen J."/>
            <person name="Haas W."/>
            <person name="Sowa M.E."/>
            <person name="Gygi S.P."/>
        </authorList>
    </citation>
    <scope>PHOSPHORYLATION [LARGE SCALE ANALYSIS] AT SER-51 AND THR-154</scope>
    <scope>IDENTIFICATION BY MASS SPECTROMETRY [LARGE SCALE ANALYSIS]</scope>
    <source>
        <tissue>Brown adipose tissue</tissue>
        <tissue>Heart</tissue>
        <tissue>Kidney</tissue>
        <tissue>Liver</tissue>
        <tissue>Lung</tissue>
        <tissue>Testis</tissue>
    </source>
</reference>
<feature type="chain" id="PRO_0000287506" description="Regulator of microtubule dynamics protein 2">
    <location>
        <begin position="1"/>
        <end position="410"/>
    </location>
</feature>
<feature type="transmembrane region" description="Helical" evidence="4">
    <location>
        <begin position="9"/>
        <end position="28"/>
    </location>
</feature>
<feature type="region of interest" description="Disordered" evidence="5">
    <location>
        <begin position="120"/>
        <end position="151"/>
    </location>
</feature>
<feature type="coiled-coil region" evidence="4">
    <location>
        <begin position="69"/>
        <end position="110"/>
    </location>
</feature>
<feature type="compositionally biased region" description="Basic residues" evidence="5">
    <location>
        <begin position="121"/>
        <end position="131"/>
    </location>
</feature>
<feature type="modified residue" description="Phosphoserine" evidence="7">
    <location>
        <position position="51"/>
    </location>
</feature>
<feature type="modified residue" description="Phosphoserine" evidence="2">
    <location>
        <position position="121"/>
    </location>
</feature>
<feature type="modified residue" description="Phosphothreonine" evidence="3">
    <location>
        <position position="139"/>
    </location>
</feature>
<feature type="modified residue" description="Phosphotyrosine" evidence="3">
    <location>
        <position position="152"/>
    </location>
</feature>
<feature type="modified residue" description="Phosphothreonine" evidence="7">
    <location>
        <position position="154"/>
    </location>
</feature>
<feature type="modified residue" description="Phosphothreonine" evidence="3">
    <location>
        <position position="157"/>
    </location>
</feature>
<feature type="sequence conflict" description="In Ref. 2; AAH24059." evidence="6" ref="2">
    <original>P</original>
    <variation>S</variation>
    <location>
        <position position="40"/>
    </location>
</feature>
<feature type="sequence conflict" description="In Ref. 2; AAH24059." evidence="6" ref="2">
    <location>
        <position position="289"/>
    </location>
</feature>
<dbReference type="EMBL" id="AK034617">
    <property type="protein sequence ID" value="BAC28771.1"/>
    <property type="molecule type" value="mRNA"/>
</dbReference>
<dbReference type="EMBL" id="AK139382">
    <property type="protein sequence ID" value="BAE23985.1"/>
    <property type="molecule type" value="mRNA"/>
</dbReference>
<dbReference type="EMBL" id="BC024059">
    <property type="protein sequence ID" value="AAH24059.1"/>
    <property type="status" value="ALT_INIT"/>
    <property type="molecule type" value="mRNA"/>
</dbReference>
<dbReference type="EMBL" id="BR000694">
    <property type="protein sequence ID" value="FAA00419.1"/>
    <property type="molecule type" value="mRNA"/>
</dbReference>
<dbReference type="CCDS" id="CCDS28985.1"/>
<dbReference type="RefSeq" id="NP_001355243.1">
    <property type="nucleotide sequence ID" value="NM_001368314.2"/>
</dbReference>
<dbReference type="RefSeq" id="NP_001401330.1">
    <property type="nucleotide sequence ID" value="NM_001414401.1"/>
</dbReference>
<dbReference type="RefSeq" id="NP_958749.1">
    <property type="nucleotide sequence ID" value="NM_201361.3"/>
</dbReference>
<dbReference type="SMR" id="Q8BSE0"/>
<dbReference type="FunCoup" id="Q8BSE0">
    <property type="interactions" value="153"/>
</dbReference>
<dbReference type="STRING" id="10090.ENSMUSP00000153443"/>
<dbReference type="iPTMnet" id="Q8BSE0"/>
<dbReference type="PhosphoSitePlus" id="Q8BSE0"/>
<dbReference type="SwissPalm" id="Q8BSE0"/>
<dbReference type="jPOST" id="Q8BSE0"/>
<dbReference type="PaxDb" id="10090-ENSMUSP00000044543"/>
<dbReference type="ProteomicsDB" id="299865"/>
<dbReference type="Pumba" id="Q8BSE0"/>
<dbReference type="Ensembl" id="ENSMUST00000040368.3">
    <property type="protein sequence ID" value="ENSMUSP00000044543.3"/>
    <property type="gene ID" value="ENSMUSG00000036368.9"/>
</dbReference>
<dbReference type="Ensembl" id="ENSMUST00000225357.2">
    <property type="protein sequence ID" value="ENSMUSP00000153443.2"/>
    <property type="gene ID" value="ENSMUSG00000036368.9"/>
</dbReference>
<dbReference type="GeneID" id="381110"/>
<dbReference type="KEGG" id="mmu:381110"/>
<dbReference type="UCSC" id="uc008dpy.1">
    <property type="organism name" value="mouse"/>
</dbReference>
<dbReference type="AGR" id="MGI:2147043"/>
<dbReference type="CTD" id="151393"/>
<dbReference type="MGI" id="MGI:2147043">
    <property type="gene designation" value="Rmdn2"/>
</dbReference>
<dbReference type="VEuPathDB" id="HostDB:ENSMUSG00000036368"/>
<dbReference type="eggNOG" id="ENOG502QS2U">
    <property type="taxonomic scope" value="Eukaryota"/>
</dbReference>
<dbReference type="GeneTree" id="ENSGT00950000182992"/>
<dbReference type="HOGENOM" id="CLU_046369_0_0_1"/>
<dbReference type="InParanoid" id="Q8BSE0"/>
<dbReference type="OMA" id="KCAESHQ"/>
<dbReference type="PhylomeDB" id="Q8BSE0"/>
<dbReference type="TreeFam" id="TF315854"/>
<dbReference type="BioGRID-ORCS" id="381110">
    <property type="hits" value="2 hits in 77 CRISPR screens"/>
</dbReference>
<dbReference type="ChiTaRS" id="Rmdn2">
    <property type="organism name" value="mouse"/>
</dbReference>
<dbReference type="PRO" id="PR:Q8BSE0"/>
<dbReference type="Proteomes" id="UP000000589">
    <property type="component" value="Chromosome 17"/>
</dbReference>
<dbReference type="RNAct" id="Q8BSE0">
    <property type="molecule type" value="protein"/>
</dbReference>
<dbReference type="Bgee" id="ENSMUSG00000036368">
    <property type="expression patterns" value="Expressed in spermatid and 223 other cell types or tissues"/>
</dbReference>
<dbReference type="ExpressionAtlas" id="Q8BSE0">
    <property type="expression patterns" value="baseline and differential"/>
</dbReference>
<dbReference type="GO" id="GO:0005829">
    <property type="term" value="C:cytosol"/>
    <property type="evidence" value="ECO:0007669"/>
    <property type="project" value="Ensembl"/>
</dbReference>
<dbReference type="GO" id="GO:0005794">
    <property type="term" value="C:Golgi apparatus"/>
    <property type="evidence" value="ECO:0007669"/>
    <property type="project" value="Ensembl"/>
</dbReference>
<dbReference type="GO" id="GO:0016020">
    <property type="term" value="C:membrane"/>
    <property type="evidence" value="ECO:0007669"/>
    <property type="project" value="UniProtKB-SubCell"/>
</dbReference>
<dbReference type="GO" id="GO:0005739">
    <property type="term" value="C:mitochondrion"/>
    <property type="evidence" value="ECO:0007005"/>
    <property type="project" value="MGI"/>
</dbReference>
<dbReference type="GO" id="GO:0097431">
    <property type="term" value="C:mitotic spindle pole"/>
    <property type="evidence" value="ECO:0007669"/>
    <property type="project" value="Ensembl"/>
</dbReference>
<dbReference type="GO" id="GO:0005876">
    <property type="term" value="C:spindle microtubule"/>
    <property type="evidence" value="ECO:0007669"/>
    <property type="project" value="Ensembl"/>
</dbReference>
<dbReference type="GO" id="GO:0008017">
    <property type="term" value="F:microtubule binding"/>
    <property type="evidence" value="ECO:0007669"/>
    <property type="project" value="Ensembl"/>
</dbReference>
<dbReference type="Gene3D" id="1.25.40.10">
    <property type="entry name" value="Tetratricopeptide repeat domain"/>
    <property type="match status" value="1"/>
</dbReference>
<dbReference type="InterPro" id="IPR049039">
    <property type="entry name" value="RMD1-3_a_helical_rpt"/>
</dbReference>
<dbReference type="InterPro" id="IPR011990">
    <property type="entry name" value="TPR-like_helical_dom_sf"/>
</dbReference>
<dbReference type="PANTHER" id="PTHR16056">
    <property type="entry name" value="REGULATOR OF MICROTUBULE DYNAMICS PROTEIN"/>
    <property type="match status" value="1"/>
</dbReference>
<dbReference type="PANTHER" id="PTHR16056:SF15">
    <property type="entry name" value="REGULATOR OF MICROTUBULE DYNAMICS PROTEIN 2"/>
    <property type="match status" value="1"/>
</dbReference>
<dbReference type="Pfam" id="PF21033">
    <property type="entry name" value="RMD1-3"/>
    <property type="match status" value="1"/>
</dbReference>
<dbReference type="SUPFAM" id="SSF48452">
    <property type="entry name" value="TPR-like"/>
    <property type="match status" value="1"/>
</dbReference>
<evidence type="ECO:0000250" key="1"/>
<evidence type="ECO:0000250" key="2">
    <source>
        <dbReference type="UniProtKB" id="Q498D5"/>
    </source>
</evidence>
<evidence type="ECO:0000250" key="3">
    <source>
        <dbReference type="UniProtKB" id="Q96LZ7"/>
    </source>
</evidence>
<evidence type="ECO:0000255" key="4"/>
<evidence type="ECO:0000256" key="5">
    <source>
        <dbReference type="SAM" id="MobiDB-lite"/>
    </source>
</evidence>
<evidence type="ECO:0000305" key="6"/>
<evidence type="ECO:0007744" key="7">
    <source>
    </source>
</evidence>
<organism>
    <name type="scientific">Mus musculus</name>
    <name type="common">Mouse</name>
    <dbReference type="NCBI Taxonomy" id="10090"/>
    <lineage>
        <taxon>Eukaryota</taxon>
        <taxon>Metazoa</taxon>
        <taxon>Chordata</taxon>
        <taxon>Craniata</taxon>
        <taxon>Vertebrata</taxon>
        <taxon>Euteleostomi</taxon>
        <taxon>Mammalia</taxon>
        <taxon>Eutheria</taxon>
        <taxon>Euarchontoglires</taxon>
        <taxon>Glires</taxon>
        <taxon>Rodentia</taxon>
        <taxon>Myomorpha</taxon>
        <taxon>Muroidea</taxon>
        <taxon>Muridae</taxon>
        <taxon>Murinae</taxon>
        <taxon>Mus</taxon>
        <taxon>Mus</taxon>
    </lineage>
</organism>
<keyword id="KW-0175">Coiled coil</keyword>
<keyword id="KW-0963">Cytoplasm</keyword>
<keyword id="KW-0206">Cytoskeleton</keyword>
<keyword id="KW-0472">Membrane</keyword>
<keyword id="KW-0493">Microtubule</keyword>
<keyword id="KW-0597">Phosphoprotein</keyword>
<keyword id="KW-1185">Reference proteome</keyword>
<keyword id="KW-0812">Transmembrane</keyword>
<keyword id="KW-1133">Transmembrane helix</keyword>
<protein>
    <recommendedName>
        <fullName>Regulator of microtubule dynamics protein 2</fullName>
        <shortName>RMD-2</shortName>
        <shortName>mRMD-2</shortName>
    </recommendedName>
    <alternativeName>
        <fullName>Protein FAM82A1</fullName>
    </alternativeName>
</protein>
<name>RMD2_MOUSE</name>
<sequence length="410" mass="47016">MPHSTNKELILGIMAGTAGISLLAFWYHKVLKPRTTMNFPKLLSLGKKFGSLTLPEESHSAQGASVVFQRRQLQILEKLNELLTNMEELKEEIRFLKETIPKLEECIQDEFGGKVTVHKISPQHRARKKKGTTVQRSATSNSSEEAESEGGYITANTDTEEQNFPFPKALNTHIEELKLDVLLQKADHLRTNESHKMESFELLCDHKEKFSEETEFLWRLARAYGDMYDLSTSTQEKKHYANIGKTLGERAITRAPMNGHCHLWYAVLCGYVSEFEGLQNKINCGHLFKKHLEIAIQLLPEEPLLYYLKGRYCYTVSRLSWIEKKMAATLFGEIPYSTVHEALHNFLKTEELQPGYSMSNYMYTAKCYVELGEPQEACKFCNLALLLPVVTKEDKDAHKEVKKMISSLKR</sequence>
<accession>Q8BSE0</accession>
<accession>A9UN02</accession>
<accession>Q8CIF1</accession>
<gene>
    <name type="primary">Rmdn2</name>
    <name type="synonym">Fam82a</name>
    <name type="synonym">Fam82a1</name>
</gene>
<proteinExistence type="evidence at protein level"/>